<accession>P9WL09</accession>
<accession>L0TBM0</accession>
<accession>O05799</accession>
<accession>Q7D630</accession>
<dbReference type="EMBL" id="AL123456">
    <property type="protein sequence ID" value="CCP45936.1"/>
    <property type="molecule type" value="Genomic_DNA"/>
</dbReference>
<dbReference type="PIR" id="E70922">
    <property type="entry name" value="E70922"/>
</dbReference>
<dbReference type="RefSeq" id="NP_217642.1">
    <property type="nucleotide sequence ID" value="NC_000962.3"/>
</dbReference>
<dbReference type="RefSeq" id="WP_003899930.1">
    <property type="nucleotide sequence ID" value="NC_000962.3"/>
</dbReference>
<dbReference type="SMR" id="P9WL09"/>
<dbReference type="STRING" id="83332.Rv3126c"/>
<dbReference type="PaxDb" id="83332-Rv3126c"/>
<dbReference type="DNASU" id="888806"/>
<dbReference type="GeneID" id="888806"/>
<dbReference type="KEGG" id="mtu:Rv3126c"/>
<dbReference type="KEGG" id="mtv:RVBD_3126c"/>
<dbReference type="TubercuList" id="Rv3126c"/>
<dbReference type="InParanoid" id="P9WL09"/>
<dbReference type="Proteomes" id="UP000001584">
    <property type="component" value="Chromosome"/>
</dbReference>
<feature type="chain" id="PRO_0000392937" description="Uncharacterized protein Rv3126c">
    <location>
        <begin position="1"/>
        <end position="104"/>
    </location>
</feature>
<feature type="region of interest" description="Disordered" evidence="1">
    <location>
        <begin position="58"/>
        <end position="84"/>
    </location>
</feature>
<feature type="compositionally biased region" description="Basic and acidic residues" evidence="1">
    <location>
        <begin position="58"/>
        <end position="71"/>
    </location>
</feature>
<sequence length="104" mass="11767">MVIRFDQIGSLVLSMKSLASLSFQRCLRENSSLVAALDRLDAAVDELSALSFDALTTPERDRARRDRDHHPWSRSRSQLSPRMAHGAVHQCQWPKAVWAVIDNP</sequence>
<reference key="1">
    <citation type="journal article" date="1998" name="Nature">
        <title>Deciphering the biology of Mycobacterium tuberculosis from the complete genome sequence.</title>
        <authorList>
            <person name="Cole S.T."/>
            <person name="Brosch R."/>
            <person name="Parkhill J."/>
            <person name="Garnier T."/>
            <person name="Churcher C.M."/>
            <person name="Harris D.E."/>
            <person name="Gordon S.V."/>
            <person name="Eiglmeier K."/>
            <person name="Gas S."/>
            <person name="Barry C.E. III"/>
            <person name="Tekaia F."/>
            <person name="Badcock K."/>
            <person name="Basham D."/>
            <person name="Brown D."/>
            <person name="Chillingworth T."/>
            <person name="Connor R."/>
            <person name="Davies R.M."/>
            <person name="Devlin K."/>
            <person name="Feltwell T."/>
            <person name="Gentles S."/>
            <person name="Hamlin N."/>
            <person name="Holroyd S."/>
            <person name="Hornsby T."/>
            <person name="Jagels K."/>
            <person name="Krogh A."/>
            <person name="McLean J."/>
            <person name="Moule S."/>
            <person name="Murphy L.D."/>
            <person name="Oliver S."/>
            <person name="Osborne J."/>
            <person name="Quail M.A."/>
            <person name="Rajandream M.A."/>
            <person name="Rogers J."/>
            <person name="Rutter S."/>
            <person name="Seeger K."/>
            <person name="Skelton S."/>
            <person name="Squares S."/>
            <person name="Squares R."/>
            <person name="Sulston J.E."/>
            <person name="Taylor K."/>
            <person name="Whitehead S."/>
            <person name="Barrell B.G."/>
        </authorList>
    </citation>
    <scope>NUCLEOTIDE SEQUENCE [LARGE SCALE GENOMIC DNA]</scope>
    <source>
        <strain>ATCC 25618 / H37Rv</strain>
    </source>
</reference>
<reference key="2">
    <citation type="journal article" date="2001" name="Proc. Natl. Acad. Sci. U.S.A.">
        <title>Regulation of the Mycobacterium tuberculosis hypoxic response gene encoding alpha -crystallin.</title>
        <authorList>
            <person name="Sherman D.R."/>
            <person name="Voskuil M."/>
            <person name="Schnappinger D."/>
            <person name="Liao R."/>
            <person name="Harrell M.I."/>
            <person name="Schoolnik G.K."/>
        </authorList>
    </citation>
    <scope>INDUCTION BY HYPOXIA</scope>
    <source>
        <strain>ATCC 25618 / H37Rv</strain>
    </source>
</reference>
<reference key="3">
    <citation type="journal article" date="2003" name="J. Exp. Med.">
        <title>Inhibition of respiration by nitric oxide induces a Mycobacterium tuberculosis dormancy program.</title>
        <authorList>
            <person name="Voskuil M.I."/>
            <person name="Schnappinger D."/>
            <person name="Visconti K.C."/>
            <person name="Harrell M.I."/>
            <person name="Dolganov G.M."/>
            <person name="Sherman D.R."/>
            <person name="Schoolnik G.K."/>
        </authorList>
    </citation>
    <scope>INDUCTION BY NITRIC OXIDE (NO) AND BY HYPOXIA</scope>
    <scope>DORMANCY REGULON</scope>
    <source>
        <strain>ATCC 25618 / H37Rv</strain>
    </source>
</reference>
<reference key="4">
    <citation type="journal article" date="2008" name="J. Biol. Chem.">
        <title>Heme oxygenase-1-derived carbon monoxide induces the Mycobacterium tuberculosis dormancy regulon.</title>
        <authorList>
            <person name="Kumar A."/>
            <person name="Deshane J.S."/>
            <person name="Crossman D.K."/>
            <person name="Bolisetty S."/>
            <person name="Yan B.S."/>
            <person name="Kramnik I."/>
            <person name="Agarwal A."/>
            <person name="Steyn A.J."/>
        </authorList>
    </citation>
    <scope>INDUCTION BY CARBON MONOXIDE (CO)</scope>
    <scope>DORMANCY REGULON</scope>
    <source>
        <strain>ATCC 25618 / H37Rv</strain>
    </source>
</reference>
<gene>
    <name type="ordered locus">Rv3126c</name>
</gene>
<organism>
    <name type="scientific">Mycobacterium tuberculosis (strain ATCC 25618 / H37Rv)</name>
    <dbReference type="NCBI Taxonomy" id="83332"/>
    <lineage>
        <taxon>Bacteria</taxon>
        <taxon>Bacillati</taxon>
        <taxon>Actinomycetota</taxon>
        <taxon>Actinomycetes</taxon>
        <taxon>Mycobacteriales</taxon>
        <taxon>Mycobacteriaceae</taxon>
        <taxon>Mycobacterium</taxon>
        <taxon>Mycobacterium tuberculosis complex</taxon>
    </lineage>
</organism>
<comment type="induction">
    <text evidence="2 3 4">A member of the dormancy regulon. Induced in response to reduced oxygen tension (hypoxia), low levels of nitric oxide (NO) and carbon monoxide (CO). It is hoped that this regulon will give insight into the latent, or dormant phase of infection.</text>
</comment>
<keyword id="KW-1185">Reference proteome</keyword>
<protein>
    <recommendedName>
        <fullName>Uncharacterized protein Rv3126c</fullName>
    </recommendedName>
</protein>
<name>Y3126_MYCTU</name>
<proteinExistence type="evidence at transcript level"/>
<evidence type="ECO:0000256" key="1">
    <source>
        <dbReference type="SAM" id="MobiDB-lite"/>
    </source>
</evidence>
<evidence type="ECO:0000269" key="2">
    <source>
    </source>
</evidence>
<evidence type="ECO:0000269" key="3">
    <source>
    </source>
</evidence>
<evidence type="ECO:0000269" key="4">
    <source>
    </source>
</evidence>